<proteinExistence type="predicted"/>
<sequence length="187" mass="20432">MSFISRLNTSLEEEAFHKQVADSQWVCSVDTGSGIINSDPTLDFKICPKTGGAISVLSVSWQNNSPQLVPGHYLLRSGTWPITGVKLSGLLVHRSIRLETTRKLLEAQRISVSQQASSSSAAGAAGKQPQVTLTQLQEELDEAKTRLALKEKELLEALSEISKLRLQLSNQLSNDDVFSGWTEEGPK</sequence>
<name>ORF1_TOTV</name>
<evidence type="ECO:0000255" key="1"/>
<protein>
    <recommendedName>
        <fullName>Uncharacterized protein ORF1</fullName>
    </recommendedName>
</protein>
<reference key="1">
    <citation type="journal article" date="2007" name="Arch. Virol.">
        <title>Identification and characterisation of tomato torrado virus, a new plant picorna-like virus from tomato.</title>
        <authorList>
            <person name="Verbeek M."/>
            <person name="Dullemans A.M."/>
            <person name="van den Heuvel J.F."/>
            <person name="Maris P.C."/>
            <person name="van der Vlugt R.A."/>
        </authorList>
    </citation>
    <scope>NUCLEOTIDE SEQUENCE [GENOMIC RNA]</scope>
</reference>
<organism>
    <name type="scientific">Tomato torrado virus (isolate Solanum lycopersicum/Spain/PRIToTV0301/-)</name>
    <name type="common">ToTV</name>
    <dbReference type="NCBI Taxonomy" id="686948"/>
    <lineage>
        <taxon>Viruses</taxon>
        <taxon>Riboviria</taxon>
        <taxon>Orthornavirae</taxon>
        <taxon>Pisuviricota</taxon>
        <taxon>Pisoniviricetes</taxon>
        <taxon>Picornavirales</taxon>
        <taxon>Secoviridae</taxon>
        <taxon>Torradovirus</taxon>
        <taxon>Torradovirus lycopersici</taxon>
    </lineage>
</organism>
<dbReference type="EMBL" id="DQ388880">
    <property type="protein sequence ID" value="ABD38935.1"/>
    <property type="molecule type" value="Genomic_RNA"/>
</dbReference>
<dbReference type="RefSeq" id="YP_001040017.1">
    <property type="nucleotide sequence ID" value="NC_009032.1"/>
</dbReference>
<dbReference type="SMR" id="A1XIQ0"/>
<dbReference type="GeneID" id="5130564"/>
<dbReference type="KEGG" id="vg:5130564"/>
<dbReference type="Proteomes" id="UP000000825">
    <property type="component" value="Genome"/>
</dbReference>
<keyword id="KW-0175">Coiled coil</keyword>
<keyword id="KW-1185">Reference proteome</keyword>
<organismHost>
    <name type="scientific">Capsicum annuum</name>
    <name type="common">Capsicum pepper</name>
    <dbReference type="NCBI Taxonomy" id="4072"/>
</organismHost>
<organismHost>
    <name type="scientific">Nicotiana tabacum</name>
    <name type="common">Common tobacco</name>
    <dbReference type="NCBI Taxonomy" id="4097"/>
</organismHost>
<organismHost>
    <name type="scientific">Solanum lycopersicum</name>
    <name type="common">Tomato</name>
    <name type="synonym">Lycopersicon esculentum</name>
    <dbReference type="NCBI Taxonomy" id="4081"/>
</organismHost>
<organismHost>
    <name type="scientific">Solanum melongena</name>
    <name type="common">eggplant</name>
    <dbReference type="NCBI Taxonomy" id="4111"/>
</organismHost>
<organismHost>
    <name type="scientific">Solanum tuberosum</name>
    <name type="common">Potato</name>
    <dbReference type="NCBI Taxonomy" id="4113"/>
</organismHost>
<accession>A1XIQ0</accession>
<feature type="chain" id="PRO_0000402780" description="Uncharacterized protein ORF1">
    <location>
        <begin position="1"/>
        <end position="187"/>
    </location>
</feature>
<feature type="coiled-coil region" evidence="1">
    <location>
        <begin position="127"/>
        <end position="172"/>
    </location>
</feature>